<accession>Q923Y2</accession>
<gene>
    <name evidence="7" type="primary">Taar7a</name>
    <name evidence="6" type="synonym">Ta8</name>
    <name evidence="6" type="synonym">Tar8</name>
    <name evidence="6" type="synonym">Trar8</name>
</gene>
<protein>
    <recommendedName>
        <fullName>Trace amine-associated receptor 7a</fullName>
        <shortName>TaR-7a</shortName>
        <shortName>Trace amine receptor 7a</shortName>
    </recommendedName>
    <alternativeName>
        <fullName evidence="6">Trace amine receptor 8</fullName>
        <shortName evidence="6">TaR-8</shortName>
    </alternativeName>
</protein>
<feature type="chain" id="PRO_0000070163" description="Trace amine-associated receptor 7a">
    <location>
        <begin position="1"/>
        <end position="358"/>
    </location>
</feature>
<feature type="topological domain" description="Extracellular" evidence="4">
    <location>
        <begin position="1"/>
        <end position="47"/>
    </location>
</feature>
<feature type="transmembrane region" description="Helical; Name=1" evidence="4">
    <location>
        <begin position="48"/>
        <end position="68"/>
    </location>
</feature>
<feature type="topological domain" description="Cytoplasmic" evidence="4">
    <location>
        <begin position="69"/>
        <end position="83"/>
    </location>
</feature>
<feature type="transmembrane region" description="Helical; Name=2" evidence="4">
    <location>
        <begin position="84"/>
        <end position="104"/>
    </location>
</feature>
<feature type="topological domain" description="Extracellular" evidence="4">
    <location>
        <begin position="105"/>
        <end position="121"/>
    </location>
</feature>
<feature type="transmembrane region" description="Helical; Name=3" evidence="4">
    <location>
        <begin position="122"/>
        <end position="143"/>
    </location>
</feature>
<feature type="topological domain" description="Cytoplasmic" evidence="4">
    <location>
        <begin position="144"/>
        <end position="166"/>
    </location>
</feature>
<feature type="transmembrane region" description="Helical; Name=4" evidence="4">
    <location>
        <begin position="167"/>
        <end position="187"/>
    </location>
</feature>
<feature type="topological domain" description="Extracellular" evidence="4">
    <location>
        <begin position="188"/>
        <end position="212"/>
    </location>
</feature>
<feature type="transmembrane region" description="Helical; Name=5" evidence="4">
    <location>
        <begin position="213"/>
        <end position="233"/>
    </location>
</feature>
<feature type="topological domain" description="Cytoplasmic" evidence="4">
    <location>
        <begin position="234"/>
        <end position="274"/>
    </location>
</feature>
<feature type="transmembrane region" description="Helical; Name=6" evidence="4">
    <location>
        <begin position="275"/>
        <end position="295"/>
    </location>
</feature>
<feature type="topological domain" description="Extracellular" evidence="4">
    <location>
        <begin position="296"/>
        <end position="309"/>
    </location>
</feature>
<feature type="transmembrane region" description="Helical; Name=7" evidence="4">
    <location>
        <begin position="310"/>
        <end position="333"/>
    </location>
</feature>
<feature type="topological domain" description="Cytoplasmic" evidence="4">
    <location>
        <begin position="334"/>
        <end position="358"/>
    </location>
</feature>
<feature type="glycosylation site" description="N-linked (GlcNAc...) asparagine" evidence="4">
    <location>
        <position position="34"/>
    </location>
</feature>
<feature type="glycosylation site" description="N-linked (GlcNAc...) asparagine" evidence="4">
    <location>
        <position position="210"/>
    </location>
</feature>
<feature type="disulfide bond" evidence="1">
    <location>
        <begin position="37"/>
        <end position="201"/>
    </location>
</feature>
<feature type="disulfide bond" evidence="5">
    <location>
        <begin position="120"/>
        <end position="205"/>
    </location>
</feature>
<reference key="1">
    <citation type="journal article" date="2001" name="Proc. Natl. Acad. Sci. U.S.A.">
        <title>Trace amines: identification of a family of mammalian G protein-coupled receptors.</title>
        <authorList>
            <person name="Borowsky B."/>
            <person name="Adham N."/>
            <person name="Jones K.A."/>
            <person name="Raddatz R."/>
            <person name="Artymyshyn R."/>
            <person name="Ogozalek K.L."/>
            <person name="Durkin M.M."/>
            <person name="Lakhlani P.P."/>
            <person name="Bonini J.A."/>
            <person name="Pathirana S."/>
            <person name="Boyle N."/>
            <person name="Pu X."/>
            <person name="Kouranova E."/>
            <person name="Lichtblau H."/>
            <person name="Ochoa F.Y."/>
            <person name="Branchek T.A."/>
            <person name="Gerald C."/>
        </authorList>
    </citation>
    <scope>NUCLEOTIDE SEQUENCE [GENOMIC DNA]</scope>
    <source>
        <strain>Sprague-Dawley</strain>
    </source>
</reference>
<proteinExistence type="inferred from homology"/>
<organism>
    <name type="scientific">Rattus norvegicus</name>
    <name type="common">Rat</name>
    <dbReference type="NCBI Taxonomy" id="10116"/>
    <lineage>
        <taxon>Eukaryota</taxon>
        <taxon>Metazoa</taxon>
        <taxon>Chordata</taxon>
        <taxon>Craniata</taxon>
        <taxon>Vertebrata</taxon>
        <taxon>Euteleostomi</taxon>
        <taxon>Mammalia</taxon>
        <taxon>Eutheria</taxon>
        <taxon>Euarchontoglires</taxon>
        <taxon>Glires</taxon>
        <taxon>Rodentia</taxon>
        <taxon>Myomorpha</taxon>
        <taxon>Muroidea</taxon>
        <taxon>Muridae</taxon>
        <taxon>Murinae</taxon>
        <taxon>Rattus</taxon>
    </lineage>
</organism>
<sequence length="358" mass="40147">MDKLVDNFLSGQSRTMSEDLLSASSPQLCYENLNGSCIRSPYSPGPRLILYAVFGFGAVLAVCGNLLVMTSILHFRQLHSPANFLVASLACADFLVGLTVMPFSTVRSVEGCWYFGDTYCKFHSCFEGSFCYSSIFHLCFISVDRYIAVSDPLIYPTRFTASVSGKCITFSWLLSIIYSFSLLYTGANEAGLEDLVSALTCVGGCQIAVNQSWVFINFLLFLVPTLVMMTVYSKIFLIAKQQAQNIEKMSKQTTRASESYKDRVAKRERKAAKTLGIAVAAFLLSWLPYFIDSIIDAFLGFITPTYVYEILVWIAYYNSAMNPLIYAFFYPWFRKAIKLIVTGKILRQNSSVTNLFPE</sequence>
<evidence type="ECO:0000250" key="1">
    <source>
        <dbReference type="UniProtKB" id="Q5QD04"/>
    </source>
</evidence>
<evidence type="ECO:0000250" key="2">
    <source>
        <dbReference type="UniProtKB" id="Q923X5"/>
    </source>
</evidence>
<evidence type="ECO:0000250" key="3">
    <source>
        <dbReference type="UniProtKB" id="Q923Y4"/>
    </source>
</evidence>
<evidence type="ECO:0000255" key="4"/>
<evidence type="ECO:0000255" key="5">
    <source>
        <dbReference type="PROSITE-ProRule" id="PRU00521"/>
    </source>
</evidence>
<evidence type="ECO:0000303" key="6">
    <source>
    </source>
</evidence>
<evidence type="ECO:0000312" key="7">
    <source>
        <dbReference type="RGD" id="631387"/>
    </source>
</evidence>
<dbReference type="EMBL" id="AF380196">
    <property type="protein sequence ID" value="AAK71247.1"/>
    <property type="molecule type" value="Genomic_DNA"/>
</dbReference>
<dbReference type="RefSeq" id="NP_783175.1">
    <property type="nucleotide sequence ID" value="NM_175585.1"/>
</dbReference>
<dbReference type="SMR" id="Q923Y2"/>
<dbReference type="FunCoup" id="Q923Y2">
    <property type="interactions" value="32"/>
</dbReference>
<dbReference type="GlyCosmos" id="Q923Y2">
    <property type="glycosylation" value="2 sites, No reported glycans"/>
</dbReference>
<dbReference type="GlyGen" id="Q923Y2">
    <property type="glycosylation" value="2 sites"/>
</dbReference>
<dbReference type="PhosphoSitePlus" id="Q923Y2"/>
<dbReference type="Ensembl" id="ENSRNOT00000061221.2">
    <property type="protein sequence ID" value="ENSRNOP00000079118.1"/>
    <property type="gene ID" value="ENSRNOG00000062468.1"/>
</dbReference>
<dbReference type="GeneID" id="294125"/>
<dbReference type="KEGG" id="rno:294125"/>
<dbReference type="AGR" id="RGD:631387"/>
<dbReference type="CTD" id="215856"/>
<dbReference type="RGD" id="631387">
    <property type="gene designation" value="Taar7a"/>
</dbReference>
<dbReference type="GeneTree" id="ENSGT00940000160273"/>
<dbReference type="InParanoid" id="Q923Y2"/>
<dbReference type="OMA" id="SCIRTPY"/>
<dbReference type="OrthoDB" id="5959645at2759"/>
<dbReference type="PhylomeDB" id="Q923Y2"/>
<dbReference type="PRO" id="PR:Q923Y2"/>
<dbReference type="Proteomes" id="UP000002494">
    <property type="component" value="Chromosome 1"/>
</dbReference>
<dbReference type="GO" id="GO:0005886">
    <property type="term" value="C:plasma membrane"/>
    <property type="evidence" value="ECO:0000318"/>
    <property type="project" value="GO_Central"/>
</dbReference>
<dbReference type="GO" id="GO:0001594">
    <property type="term" value="F:trace-amine receptor activity"/>
    <property type="evidence" value="ECO:0000318"/>
    <property type="project" value="GO_Central"/>
</dbReference>
<dbReference type="GO" id="GO:0007186">
    <property type="term" value="P:G protein-coupled receptor signaling pathway"/>
    <property type="evidence" value="ECO:0000318"/>
    <property type="project" value="GO_Central"/>
</dbReference>
<dbReference type="FunFam" id="1.20.1070.10:FF:000030">
    <property type="entry name" value="trace amine-associated receptor 1"/>
    <property type="match status" value="1"/>
</dbReference>
<dbReference type="Gene3D" id="1.20.1070.10">
    <property type="entry name" value="Rhodopsin 7-helix transmembrane proteins"/>
    <property type="match status" value="1"/>
</dbReference>
<dbReference type="InterPro" id="IPR000276">
    <property type="entry name" value="GPCR_Rhodpsn"/>
</dbReference>
<dbReference type="InterPro" id="IPR017452">
    <property type="entry name" value="GPCR_Rhodpsn_7TM"/>
</dbReference>
<dbReference type="InterPro" id="IPR050569">
    <property type="entry name" value="TAAR"/>
</dbReference>
<dbReference type="InterPro" id="IPR009132">
    <property type="entry name" value="TAAR_fam"/>
</dbReference>
<dbReference type="PANTHER" id="PTHR24249">
    <property type="entry name" value="HISTAMINE RECEPTOR-RELATED G-PROTEIN COUPLED RECEPTOR"/>
    <property type="match status" value="1"/>
</dbReference>
<dbReference type="PANTHER" id="PTHR24249:SF78">
    <property type="entry name" value="TRACE AMINE-ASSOCIATED RECEPTOR 7A-RELATED"/>
    <property type="match status" value="1"/>
</dbReference>
<dbReference type="Pfam" id="PF00001">
    <property type="entry name" value="7tm_1"/>
    <property type="match status" value="1"/>
</dbReference>
<dbReference type="PRINTS" id="PR00237">
    <property type="entry name" value="GPCRRHODOPSN"/>
</dbReference>
<dbReference type="PRINTS" id="PR01830">
    <property type="entry name" value="TRACEAMINER"/>
</dbReference>
<dbReference type="SMART" id="SM01381">
    <property type="entry name" value="7TM_GPCR_Srsx"/>
    <property type="match status" value="1"/>
</dbReference>
<dbReference type="SUPFAM" id="SSF81321">
    <property type="entry name" value="Family A G protein-coupled receptor-like"/>
    <property type="match status" value="1"/>
</dbReference>
<dbReference type="PROSITE" id="PS00237">
    <property type="entry name" value="G_PROTEIN_RECEP_F1_1"/>
    <property type="match status" value="1"/>
</dbReference>
<dbReference type="PROSITE" id="PS50262">
    <property type="entry name" value="G_PROTEIN_RECEP_F1_2"/>
    <property type="match status" value="1"/>
</dbReference>
<name>TAA7A_RAT</name>
<keyword id="KW-1003">Cell membrane</keyword>
<keyword id="KW-1015">Disulfide bond</keyword>
<keyword id="KW-0297">G-protein coupled receptor</keyword>
<keyword id="KW-0325">Glycoprotein</keyword>
<keyword id="KW-0472">Membrane</keyword>
<keyword id="KW-0675">Receptor</keyword>
<keyword id="KW-1185">Reference proteome</keyword>
<keyword id="KW-0807">Transducer</keyword>
<keyword id="KW-0812">Transmembrane</keyword>
<keyword id="KW-1133">Transmembrane helix</keyword>
<comment type="function">
    <text evidence="3">Olfactory receptor specific for N,N-dimethylalkylamines trace amines. Trace amine compounds are enriched in animal body fluids and act on trace amine-associated receptors (TAARs) to elicit both intraspecific and interspecific innate behaviors. Ligand-binding causes a conformation change that triggers signaling via G(s)-class of G alpha proteins (GNAL or GNAS).</text>
</comment>
<comment type="subcellular location">
    <subcellularLocation>
        <location evidence="2">Cell membrane</location>
        <topology evidence="4">Multi-pass membrane protein</topology>
    </subcellularLocation>
</comment>
<comment type="domain">
    <text evidence="1">In addition to the well known disulfide bond common to G-protein coupled receptor 1 family, trace amine-associated receptors (TAARs) contain an unique disulfide bond (Cys-37-Cys-201) connecting the N-terminus to the extracellular Loop 2 (ECL2), which is required for agonist-induced receptor activation.</text>
</comment>
<comment type="similarity">
    <text evidence="5">Belongs to the G-protein coupled receptor 1 family.</text>
</comment>